<keyword id="KW-0067">ATP-binding</keyword>
<keyword id="KW-0963">Cytoplasm</keyword>
<keyword id="KW-0324">Glycolysis</keyword>
<keyword id="KW-0418">Kinase</keyword>
<keyword id="KW-0547">Nucleotide-binding</keyword>
<keyword id="KW-0808">Transferase</keyword>
<dbReference type="EC" id="2.7.1.2" evidence="1"/>
<dbReference type="EMBL" id="FM200053">
    <property type="protein sequence ID" value="CAR58549.1"/>
    <property type="molecule type" value="Genomic_DNA"/>
</dbReference>
<dbReference type="RefSeq" id="WP_000170380.1">
    <property type="nucleotide sequence ID" value="NC_011147.1"/>
</dbReference>
<dbReference type="SMR" id="B5BB85"/>
<dbReference type="KEGG" id="sek:SSPA0424"/>
<dbReference type="HOGENOM" id="CLU_042582_1_0_6"/>
<dbReference type="Proteomes" id="UP000001869">
    <property type="component" value="Chromosome"/>
</dbReference>
<dbReference type="GO" id="GO:0005829">
    <property type="term" value="C:cytosol"/>
    <property type="evidence" value="ECO:0007669"/>
    <property type="project" value="TreeGrafter"/>
</dbReference>
<dbReference type="GO" id="GO:0005524">
    <property type="term" value="F:ATP binding"/>
    <property type="evidence" value="ECO:0007669"/>
    <property type="project" value="UniProtKB-UniRule"/>
</dbReference>
<dbReference type="GO" id="GO:0005536">
    <property type="term" value="F:D-glucose binding"/>
    <property type="evidence" value="ECO:0007669"/>
    <property type="project" value="InterPro"/>
</dbReference>
<dbReference type="GO" id="GO:0004340">
    <property type="term" value="F:glucokinase activity"/>
    <property type="evidence" value="ECO:0007669"/>
    <property type="project" value="UniProtKB-UniRule"/>
</dbReference>
<dbReference type="GO" id="GO:0006096">
    <property type="term" value="P:glycolytic process"/>
    <property type="evidence" value="ECO:0007669"/>
    <property type="project" value="UniProtKB-UniRule"/>
</dbReference>
<dbReference type="CDD" id="cd24008">
    <property type="entry name" value="ASKHA_NBD_GLK"/>
    <property type="match status" value="1"/>
</dbReference>
<dbReference type="FunFam" id="3.30.420.40:FF:000045">
    <property type="entry name" value="Glucokinase"/>
    <property type="match status" value="1"/>
</dbReference>
<dbReference type="FunFam" id="3.40.367.20:FF:000002">
    <property type="entry name" value="Glucokinase"/>
    <property type="match status" value="1"/>
</dbReference>
<dbReference type="Gene3D" id="3.30.420.40">
    <property type="match status" value="1"/>
</dbReference>
<dbReference type="Gene3D" id="3.40.367.20">
    <property type="match status" value="1"/>
</dbReference>
<dbReference type="HAMAP" id="MF_00524">
    <property type="entry name" value="Glucokinase"/>
    <property type="match status" value="1"/>
</dbReference>
<dbReference type="InterPro" id="IPR043129">
    <property type="entry name" value="ATPase_NBD"/>
</dbReference>
<dbReference type="InterPro" id="IPR050201">
    <property type="entry name" value="Bacterial_glucokinase"/>
</dbReference>
<dbReference type="InterPro" id="IPR003836">
    <property type="entry name" value="Glucokinase"/>
</dbReference>
<dbReference type="NCBIfam" id="TIGR00749">
    <property type="entry name" value="glk"/>
    <property type="match status" value="1"/>
</dbReference>
<dbReference type="NCBIfam" id="NF001414">
    <property type="entry name" value="PRK00292.1-1"/>
    <property type="match status" value="1"/>
</dbReference>
<dbReference type="NCBIfam" id="NF001416">
    <property type="entry name" value="PRK00292.1-3"/>
    <property type="match status" value="1"/>
</dbReference>
<dbReference type="PANTHER" id="PTHR47690">
    <property type="entry name" value="GLUCOKINASE"/>
    <property type="match status" value="1"/>
</dbReference>
<dbReference type="PANTHER" id="PTHR47690:SF1">
    <property type="entry name" value="GLUCOKINASE"/>
    <property type="match status" value="1"/>
</dbReference>
<dbReference type="Pfam" id="PF02685">
    <property type="entry name" value="Glucokinase"/>
    <property type="match status" value="1"/>
</dbReference>
<dbReference type="SUPFAM" id="SSF53067">
    <property type="entry name" value="Actin-like ATPase domain"/>
    <property type="match status" value="1"/>
</dbReference>
<evidence type="ECO:0000255" key="1">
    <source>
        <dbReference type="HAMAP-Rule" id="MF_00524"/>
    </source>
</evidence>
<gene>
    <name evidence="1" type="primary">glk</name>
    <name type="ordered locus">SSPA0424</name>
</gene>
<name>GLK_SALPK</name>
<sequence>MTKYALVGDVGGTNARLALCDIASGEISQAKTYSGLDYPSLEAVVRVYLDEHSVSVEDGCIAIACPITGDWVAMTNHTWAFSIAEMKKNLGFSHLEIINDFTAVSMAIPMLKKEHLIQFGGGEPVDGKPIAVYGAGTGLGVAHLVHVDKRWISLPGEGGHVDFAPNSEEEAMILEILRAEIGHVSAERVLSGPGLVNLYRAIVKSDNRLPENLRPKDITERALADSCIDCRRALSLFCVIMGRFGGDLALTMGTFGGVYIAGGIVPRFLEFFKASGFRGGFEDKGRFKDYVHGIPVYLIVHDNPGLLGSGAHLRQTLGHIL</sequence>
<reference key="1">
    <citation type="journal article" date="2009" name="BMC Genomics">
        <title>Pseudogene accumulation in the evolutionary histories of Salmonella enterica serovars Paratyphi A and Typhi.</title>
        <authorList>
            <person name="Holt K.E."/>
            <person name="Thomson N.R."/>
            <person name="Wain J."/>
            <person name="Langridge G.C."/>
            <person name="Hasan R."/>
            <person name="Bhutta Z.A."/>
            <person name="Quail M.A."/>
            <person name="Norbertczak H."/>
            <person name="Walker D."/>
            <person name="Simmonds M."/>
            <person name="White B."/>
            <person name="Bason N."/>
            <person name="Mungall K."/>
            <person name="Dougan G."/>
            <person name="Parkhill J."/>
        </authorList>
    </citation>
    <scope>NUCLEOTIDE SEQUENCE [LARGE SCALE GENOMIC DNA]</scope>
    <source>
        <strain>AKU_12601</strain>
    </source>
</reference>
<protein>
    <recommendedName>
        <fullName evidence="1">Glucokinase</fullName>
        <ecNumber evidence="1">2.7.1.2</ecNumber>
    </recommendedName>
    <alternativeName>
        <fullName evidence="1">Glucose kinase</fullName>
    </alternativeName>
</protein>
<accession>B5BB85</accession>
<feature type="chain" id="PRO_1000127723" description="Glucokinase">
    <location>
        <begin position="1"/>
        <end position="321"/>
    </location>
</feature>
<feature type="binding site" evidence="1">
    <location>
        <begin position="8"/>
        <end position="13"/>
    </location>
    <ligand>
        <name>ATP</name>
        <dbReference type="ChEBI" id="CHEBI:30616"/>
    </ligand>
</feature>
<organism>
    <name type="scientific">Salmonella paratyphi A (strain AKU_12601)</name>
    <dbReference type="NCBI Taxonomy" id="554290"/>
    <lineage>
        <taxon>Bacteria</taxon>
        <taxon>Pseudomonadati</taxon>
        <taxon>Pseudomonadota</taxon>
        <taxon>Gammaproteobacteria</taxon>
        <taxon>Enterobacterales</taxon>
        <taxon>Enterobacteriaceae</taxon>
        <taxon>Salmonella</taxon>
    </lineage>
</organism>
<comment type="catalytic activity">
    <reaction evidence="1">
        <text>D-glucose + ATP = D-glucose 6-phosphate + ADP + H(+)</text>
        <dbReference type="Rhea" id="RHEA:17825"/>
        <dbReference type="ChEBI" id="CHEBI:4167"/>
        <dbReference type="ChEBI" id="CHEBI:15378"/>
        <dbReference type="ChEBI" id="CHEBI:30616"/>
        <dbReference type="ChEBI" id="CHEBI:61548"/>
        <dbReference type="ChEBI" id="CHEBI:456216"/>
        <dbReference type="EC" id="2.7.1.2"/>
    </reaction>
</comment>
<comment type="subcellular location">
    <subcellularLocation>
        <location evidence="1">Cytoplasm</location>
    </subcellularLocation>
</comment>
<comment type="similarity">
    <text evidence="1">Belongs to the bacterial glucokinase family.</text>
</comment>
<proteinExistence type="inferred from homology"/>